<organism>
    <name type="scientific">Arabidopsis thaliana</name>
    <name type="common">Mouse-ear cress</name>
    <dbReference type="NCBI Taxonomy" id="3702"/>
    <lineage>
        <taxon>Eukaryota</taxon>
        <taxon>Viridiplantae</taxon>
        <taxon>Streptophyta</taxon>
        <taxon>Embryophyta</taxon>
        <taxon>Tracheophyta</taxon>
        <taxon>Spermatophyta</taxon>
        <taxon>Magnoliopsida</taxon>
        <taxon>eudicotyledons</taxon>
        <taxon>Gunneridae</taxon>
        <taxon>Pentapetalae</taxon>
        <taxon>rosids</taxon>
        <taxon>malvids</taxon>
        <taxon>Brassicales</taxon>
        <taxon>Brassicaceae</taxon>
        <taxon>Camelineae</taxon>
        <taxon>Arabidopsis</taxon>
    </lineage>
</organism>
<accession>Q9SZ10</accession>
<protein>
    <recommendedName>
        <fullName>Pentatricopeptide repeat-containing protein At4g26680, mitochondrial</fullName>
    </recommendedName>
</protein>
<sequence>MIRISIGVNRRLRYQFSSFAGYSGSENPRLFKTLGAANTPIPHRRNPEPKGQDLDFVNVAHSHLIQSDWDKLNKLSDHLDSFRVKNVLLKIQKDYLLSLEFFNWAKTRNPGSHSLETHAIVLHTLTKNRKFKSAESILRDVLVNGGVDLPAKVFDALLYSYRECDSTPRVFDSLFKTFAHLKKFRNATDTFMQMKDYGFLPTVESCNAYMSSLLGQGRVDIALRFYREMRRCKISPNPYTLNMVMSGYCRSGKLDKGIELLQDMERLGFRATDVSYNTLIAGHCEKGLLSSALKLKNMMGKSGLQPNVVTFNTLIHGFCRAMKLQEASKVFGEMKAVNVAPNTVTYNTLINGYSQQGDHEMAFRFYEDMVCNGIQRDILTYNALIFGLCKQAKTRKAAQFVKELDKENLVPNSSTFSALIMGQCVRKNADRGFELYKSMIRSGCHPNEQTFNMLVSAFCRNEDFDGASQVLREMVRRSIPLDSRTVHQVCNGLKHQGKDQLVKKLLQEMEGKKFLQESFNN</sequence>
<dbReference type="EMBL" id="AL035440">
    <property type="protein sequence ID" value="CAB36514.1"/>
    <property type="molecule type" value="Genomic_DNA"/>
</dbReference>
<dbReference type="EMBL" id="AL161565">
    <property type="protein sequence ID" value="CAB79523.1"/>
    <property type="molecule type" value="Genomic_DNA"/>
</dbReference>
<dbReference type="EMBL" id="CP002687">
    <property type="protein sequence ID" value="AEE85236.1"/>
    <property type="molecule type" value="Genomic_DNA"/>
</dbReference>
<dbReference type="EMBL" id="CP002687">
    <property type="protein sequence ID" value="AEE85237.1"/>
    <property type="molecule type" value="Genomic_DNA"/>
</dbReference>
<dbReference type="PIR" id="T04791">
    <property type="entry name" value="T04791"/>
</dbReference>
<dbReference type="RefSeq" id="NP_001190849.1">
    <property type="nucleotide sequence ID" value="NM_001203920.1"/>
</dbReference>
<dbReference type="RefSeq" id="NP_194398.1">
    <property type="nucleotide sequence ID" value="NM_118802.2"/>
</dbReference>
<dbReference type="SMR" id="Q9SZ10"/>
<dbReference type="FunCoup" id="Q9SZ10">
    <property type="interactions" value="3"/>
</dbReference>
<dbReference type="PaxDb" id="3702-AT4G26680.1"/>
<dbReference type="ProteomicsDB" id="249238"/>
<dbReference type="EnsemblPlants" id="AT4G26680.1">
    <property type="protein sequence ID" value="AT4G26680.1"/>
    <property type="gene ID" value="AT4G26680"/>
</dbReference>
<dbReference type="EnsemblPlants" id="AT4G26680.2">
    <property type="protein sequence ID" value="AT4G26680.2"/>
    <property type="gene ID" value="AT4G26680"/>
</dbReference>
<dbReference type="GeneID" id="828775"/>
<dbReference type="Gramene" id="AT4G26680.1">
    <property type="protein sequence ID" value="AT4G26680.1"/>
    <property type="gene ID" value="AT4G26680"/>
</dbReference>
<dbReference type="Gramene" id="AT4G26680.2">
    <property type="protein sequence ID" value="AT4G26680.2"/>
    <property type="gene ID" value="AT4G26680"/>
</dbReference>
<dbReference type="KEGG" id="ath:AT4G26680"/>
<dbReference type="Araport" id="AT4G26680"/>
<dbReference type="TAIR" id="AT4G26680"/>
<dbReference type="eggNOG" id="KOG4197">
    <property type="taxonomic scope" value="Eukaryota"/>
</dbReference>
<dbReference type="HOGENOM" id="CLU_002706_49_12_1"/>
<dbReference type="InParanoid" id="Q9SZ10"/>
<dbReference type="OMA" id="CRMKDYG"/>
<dbReference type="OrthoDB" id="185373at2759"/>
<dbReference type="PhylomeDB" id="Q9SZ10"/>
<dbReference type="PRO" id="PR:Q9SZ10"/>
<dbReference type="Proteomes" id="UP000006548">
    <property type="component" value="Chromosome 4"/>
</dbReference>
<dbReference type="ExpressionAtlas" id="Q9SZ10">
    <property type="expression patterns" value="baseline and differential"/>
</dbReference>
<dbReference type="GO" id="GO:0005739">
    <property type="term" value="C:mitochondrion"/>
    <property type="evidence" value="ECO:0007669"/>
    <property type="project" value="UniProtKB-SubCell"/>
</dbReference>
<dbReference type="Gene3D" id="1.25.40.10">
    <property type="entry name" value="Tetratricopeptide repeat domain"/>
    <property type="match status" value="3"/>
</dbReference>
<dbReference type="InterPro" id="IPR051240">
    <property type="entry name" value="Mito_RNA-Proc/Resp"/>
</dbReference>
<dbReference type="InterPro" id="IPR002885">
    <property type="entry name" value="Pentatricopeptide_rpt"/>
</dbReference>
<dbReference type="InterPro" id="IPR011990">
    <property type="entry name" value="TPR-like_helical_dom_sf"/>
</dbReference>
<dbReference type="NCBIfam" id="TIGR00756">
    <property type="entry name" value="PPR"/>
    <property type="match status" value="8"/>
</dbReference>
<dbReference type="PANTHER" id="PTHR47933">
    <property type="entry name" value="PENTATRICOPEPTIDE REPEAT-CONTAINING PROTEIN 1, MITOCHONDRIAL"/>
    <property type="match status" value="1"/>
</dbReference>
<dbReference type="PANTHER" id="PTHR47933:SF11">
    <property type="entry name" value="PENTATRICOPEPTIDE REPEAT-CONTAINING PROTEIN 2"/>
    <property type="match status" value="1"/>
</dbReference>
<dbReference type="Pfam" id="PF13041">
    <property type="entry name" value="PPR_2"/>
    <property type="match status" value="4"/>
</dbReference>
<dbReference type="PROSITE" id="PS51375">
    <property type="entry name" value="PPR"/>
    <property type="match status" value="11"/>
</dbReference>
<proteinExistence type="inferred from homology"/>
<comment type="subcellular location">
    <subcellularLocation>
        <location evidence="2">Mitochondrion</location>
    </subcellularLocation>
</comment>
<comment type="similarity">
    <text evidence="2">Belongs to the PPR family. P subfamily.</text>
</comment>
<comment type="online information" name="Pentatricopeptide repeat proteins">
    <link uri="https://ppr.plantenergy.uwa.edu.au"/>
</comment>
<keyword id="KW-0496">Mitochondrion</keyword>
<keyword id="KW-1185">Reference proteome</keyword>
<keyword id="KW-0677">Repeat</keyword>
<keyword id="KW-0809">Transit peptide</keyword>
<evidence type="ECO:0000255" key="1"/>
<evidence type="ECO:0000305" key="2"/>
<name>PP338_ARATH</name>
<gene>
    <name type="ordered locus">At4g26680</name>
    <name type="ORF">F10M23.20</name>
</gene>
<feature type="transit peptide" description="Mitochondrion" evidence="1">
    <location>
        <begin position="1"/>
        <end position="38"/>
    </location>
</feature>
<feature type="chain" id="PRO_0000363455" description="Pentatricopeptide repeat-containing protein At4g26680, mitochondrial">
    <location>
        <begin position="39"/>
        <end position="521"/>
    </location>
</feature>
<feature type="repeat" description="PPR 1">
    <location>
        <begin position="167"/>
        <end position="201"/>
    </location>
</feature>
<feature type="repeat" description="PPR 2">
    <location>
        <begin position="202"/>
        <end position="236"/>
    </location>
</feature>
<feature type="repeat" description="PPR 3">
    <location>
        <begin position="237"/>
        <end position="271"/>
    </location>
</feature>
<feature type="repeat" description="PPR 4">
    <location>
        <begin position="272"/>
        <end position="306"/>
    </location>
</feature>
<feature type="repeat" description="PPR 5">
    <location>
        <begin position="307"/>
        <end position="341"/>
    </location>
</feature>
<feature type="repeat" description="PPR 6">
    <location>
        <begin position="342"/>
        <end position="376"/>
    </location>
</feature>
<feature type="repeat" description="PPR 7">
    <location>
        <begin position="377"/>
        <end position="411"/>
    </location>
</feature>
<feature type="repeat" description="PPR 8">
    <location>
        <begin position="412"/>
        <end position="446"/>
    </location>
</feature>
<feature type="repeat" description="PPR 9">
    <location>
        <begin position="447"/>
        <end position="481"/>
    </location>
</feature>
<feature type="repeat" description="PPR 10">
    <location>
        <begin position="482"/>
        <end position="516"/>
    </location>
</feature>
<reference key="1">
    <citation type="journal article" date="1999" name="Nature">
        <title>Sequence and analysis of chromosome 4 of the plant Arabidopsis thaliana.</title>
        <authorList>
            <person name="Mayer K.F.X."/>
            <person name="Schueller C."/>
            <person name="Wambutt R."/>
            <person name="Murphy G."/>
            <person name="Volckaert G."/>
            <person name="Pohl T."/>
            <person name="Duesterhoeft A."/>
            <person name="Stiekema W."/>
            <person name="Entian K.-D."/>
            <person name="Terryn N."/>
            <person name="Harris B."/>
            <person name="Ansorge W."/>
            <person name="Brandt P."/>
            <person name="Grivell L.A."/>
            <person name="Rieger M."/>
            <person name="Weichselgartner M."/>
            <person name="de Simone V."/>
            <person name="Obermaier B."/>
            <person name="Mache R."/>
            <person name="Mueller M."/>
            <person name="Kreis M."/>
            <person name="Delseny M."/>
            <person name="Puigdomenech P."/>
            <person name="Watson M."/>
            <person name="Schmidtheini T."/>
            <person name="Reichert B."/>
            <person name="Portetelle D."/>
            <person name="Perez-Alonso M."/>
            <person name="Boutry M."/>
            <person name="Bancroft I."/>
            <person name="Vos P."/>
            <person name="Hoheisel J."/>
            <person name="Zimmermann W."/>
            <person name="Wedler H."/>
            <person name="Ridley P."/>
            <person name="Langham S.-A."/>
            <person name="McCullagh B."/>
            <person name="Bilham L."/>
            <person name="Robben J."/>
            <person name="van der Schueren J."/>
            <person name="Grymonprez B."/>
            <person name="Chuang Y.-J."/>
            <person name="Vandenbussche F."/>
            <person name="Braeken M."/>
            <person name="Weltjens I."/>
            <person name="Voet M."/>
            <person name="Bastiaens I."/>
            <person name="Aert R."/>
            <person name="Defoor E."/>
            <person name="Weitzenegger T."/>
            <person name="Bothe G."/>
            <person name="Ramsperger U."/>
            <person name="Hilbert H."/>
            <person name="Braun M."/>
            <person name="Holzer E."/>
            <person name="Brandt A."/>
            <person name="Peters S."/>
            <person name="van Staveren M."/>
            <person name="Dirkse W."/>
            <person name="Mooijman P."/>
            <person name="Klein Lankhorst R."/>
            <person name="Rose M."/>
            <person name="Hauf J."/>
            <person name="Koetter P."/>
            <person name="Berneiser S."/>
            <person name="Hempel S."/>
            <person name="Feldpausch M."/>
            <person name="Lamberth S."/>
            <person name="Van den Daele H."/>
            <person name="De Keyser A."/>
            <person name="Buysshaert C."/>
            <person name="Gielen J."/>
            <person name="Villarroel R."/>
            <person name="De Clercq R."/>
            <person name="van Montagu M."/>
            <person name="Rogers J."/>
            <person name="Cronin A."/>
            <person name="Quail M.A."/>
            <person name="Bray-Allen S."/>
            <person name="Clark L."/>
            <person name="Doggett J."/>
            <person name="Hall S."/>
            <person name="Kay M."/>
            <person name="Lennard N."/>
            <person name="McLay K."/>
            <person name="Mayes R."/>
            <person name="Pettett A."/>
            <person name="Rajandream M.A."/>
            <person name="Lyne M."/>
            <person name="Benes V."/>
            <person name="Rechmann S."/>
            <person name="Borkova D."/>
            <person name="Bloecker H."/>
            <person name="Scharfe M."/>
            <person name="Grimm M."/>
            <person name="Loehnert T.-H."/>
            <person name="Dose S."/>
            <person name="de Haan M."/>
            <person name="Maarse A.C."/>
            <person name="Schaefer M."/>
            <person name="Mueller-Auer S."/>
            <person name="Gabel C."/>
            <person name="Fuchs M."/>
            <person name="Fartmann B."/>
            <person name="Granderath K."/>
            <person name="Dauner D."/>
            <person name="Herzl A."/>
            <person name="Neumann S."/>
            <person name="Argiriou A."/>
            <person name="Vitale D."/>
            <person name="Liguori R."/>
            <person name="Piravandi E."/>
            <person name="Massenet O."/>
            <person name="Quigley F."/>
            <person name="Clabauld G."/>
            <person name="Muendlein A."/>
            <person name="Felber R."/>
            <person name="Schnabl S."/>
            <person name="Hiller R."/>
            <person name="Schmidt W."/>
            <person name="Lecharny A."/>
            <person name="Aubourg S."/>
            <person name="Chefdor F."/>
            <person name="Cooke R."/>
            <person name="Berger C."/>
            <person name="Monfort A."/>
            <person name="Casacuberta E."/>
            <person name="Gibbons T."/>
            <person name="Weber N."/>
            <person name="Vandenbol M."/>
            <person name="Bargues M."/>
            <person name="Terol J."/>
            <person name="Torres A."/>
            <person name="Perez-Perez A."/>
            <person name="Purnelle B."/>
            <person name="Bent E."/>
            <person name="Johnson S."/>
            <person name="Tacon D."/>
            <person name="Jesse T."/>
            <person name="Heijnen L."/>
            <person name="Schwarz S."/>
            <person name="Scholler P."/>
            <person name="Heber S."/>
            <person name="Francs P."/>
            <person name="Bielke C."/>
            <person name="Frishman D."/>
            <person name="Haase D."/>
            <person name="Lemcke K."/>
            <person name="Mewes H.-W."/>
            <person name="Stocker S."/>
            <person name="Zaccaria P."/>
            <person name="Bevan M."/>
            <person name="Wilson R.K."/>
            <person name="de la Bastide M."/>
            <person name="Habermann K."/>
            <person name="Parnell L."/>
            <person name="Dedhia N."/>
            <person name="Gnoj L."/>
            <person name="Schutz K."/>
            <person name="Huang E."/>
            <person name="Spiegel L."/>
            <person name="Sekhon M."/>
            <person name="Murray J."/>
            <person name="Sheet P."/>
            <person name="Cordes M."/>
            <person name="Abu-Threideh J."/>
            <person name="Stoneking T."/>
            <person name="Kalicki J."/>
            <person name="Graves T."/>
            <person name="Harmon G."/>
            <person name="Edwards J."/>
            <person name="Latreille P."/>
            <person name="Courtney L."/>
            <person name="Cloud J."/>
            <person name="Abbott A."/>
            <person name="Scott K."/>
            <person name="Johnson D."/>
            <person name="Minx P."/>
            <person name="Bentley D."/>
            <person name="Fulton B."/>
            <person name="Miller N."/>
            <person name="Greco T."/>
            <person name="Kemp K."/>
            <person name="Kramer J."/>
            <person name="Fulton L."/>
            <person name="Mardis E."/>
            <person name="Dante M."/>
            <person name="Pepin K."/>
            <person name="Hillier L.W."/>
            <person name="Nelson J."/>
            <person name="Spieth J."/>
            <person name="Ryan E."/>
            <person name="Andrews S."/>
            <person name="Geisel C."/>
            <person name="Layman D."/>
            <person name="Du H."/>
            <person name="Ali J."/>
            <person name="Berghoff A."/>
            <person name="Jones K."/>
            <person name="Drone K."/>
            <person name="Cotton M."/>
            <person name="Joshu C."/>
            <person name="Antonoiu B."/>
            <person name="Zidanic M."/>
            <person name="Strong C."/>
            <person name="Sun H."/>
            <person name="Lamar B."/>
            <person name="Yordan C."/>
            <person name="Ma P."/>
            <person name="Zhong J."/>
            <person name="Preston R."/>
            <person name="Vil D."/>
            <person name="Shekher M."/>
            <person name="Matero A."/>
            <person name="Shah R."/>
            <person name="Swaby I.K."/>
            <person name="O'Shaughnessy A."/>
            <person name="Rodriguez M."/>
            <person name="Hoffman J."/>
            <person name="Till S."/>
            <person name="Granat S."/>
            <person name="Shohdy N."/>
            <person name="Hasegawa A."/>
            <person name="Hameed A."/>
            <person name="Lodhi M."/>
            <person name="Johnson A."/>
            <person name="Chen E."/>
            <person name="Marra M.A."/>
            <person name="Martienssen R."/>
            <person name="McCombie W.R."/>
        </authorList>
    </citation>
    <scope>NUCLEOTIDE SEQUENCE [LARGE SCALE GENOMIC DNA]</scope>
    <source>
        <strain>cv. Columbia</strain>
    </source>
</reference>
<reference key="2">
    <citation type="journal article" date="2017" name="Plant J.">
        <title>Araport11: a complete reannotation of the Arabidopsis thaliana reference genome.</title>
        <authorList>
            <person name="Cheng C.Y."/>
            <person name="Krishnakumar V."/>
            <person name="Chan A.P."/>
            <person name="Thibaud-Nissen F."/>
            <person name="Schobel S."/>
            <person name="Town C.D."/>
        </authorList>
    </citation>
    <scope>GENOME REANNOTATION</scope>
    <source>
        <strain>cv. Columbia</strain>
    </source>
</reference>
<reference key="3">
    <citation type="journal article" date="2004" name="Plant Cell">
        <title>Genome-wide analysis of Arabidopsis pentatricopeptide repeat proteins reveals their essential role in organelle biogenesis.</title>
        <authorList>
            <person name="Lurin C."/>
            <person name="Andres C."/>
            <person name="Aubourg S."/>
            <person name="Bellaoui M."/>
            <person name="Bitton F."/>
            <person name="Bruyere C."/>
            <person name="Caboche M."/>
            <person name="Debast C."/>
            <person name="Gualberto J."/>
            <person name="Hoffmann B."/>
            <person name="Lecharny A."/>
            <person name="Le Ret M."/>
            <person name="Martin-Magniette M.-L."/>
            <person name="Mireau H."/>
            <person name="Peeters N."/>
            <person name="Renou J.-P."/>
            <person name="Szurek B."/>
            <person name="Taconnat L."/>
            <person name="Small I."/>
        </authorList>
    </citation>
    <scope>GENE FAMILY</scope>
</reference>